<keyword id="KW-0963">Cytoplasm</keyword>
<keyword id="KW-0378">Hydrolase</keyword>
<keyword id="KW-0460">Magnesium</keyword>
<keyword id="KW-0464">Manganese</keyword>
<keyword id="KW-0479">Metal-binding</keyword>
<keyword id="KW-0546">Nucleotide metabolism</keyword>
<keyword id="KW-0547">Nucleotide-binding</keyword>
<keyword id="KW-0539">Nucleus</keyword>
<keyword id="KW-1185">Reference proteome</keyword>
<accession>Q6CDL9</accession>
<protein>
    <recommendedName>
        <fullName evidence="1">Inosine triphosphate pyrophosphatase</fullName>
        <shortName evidence="1">ITPase</shortName>
        <shortName evidence="1">Inosine triphosphatase</shortName>
        <ecNumber evidence="1">3.6.1.66</ecNumber>
    </recommendedName>
    <alternativeName>
        <fullName evidence="1">Non-canonical purine NTP pyrophosphatase</fullName>
    </alternativeName>
    <alternativeName>
        <fullName evidence="1">Non-standard purine NTP pyrophosphatase</fullName>
    </alternativeName>
    <alternativeName>
        <fullName evidence="1">Nucleoside-triphosphate diphosphatase</fullName>
    </alternativeName>
    <alternativeName>
        <fullName evidence="1">Nucleoside-triphosphate pyrophosphatase</fullName>
        <shortName evidence="1">NTPase</shortName>
    </alternativeName>
    <alternativeName>
        <fullName evidence="1">XTP/dITP diphosphatase</fullName>
    </alternativeName>
</protein>
<gene>
    <name evidence="1" type="primary">HAM1</name>
    <name type="ordered locus">YALI0B22924g</name>
</gene>
<reference key="1">
    <citation type="journal article" date="2004" name="Nature">
        <title>Genome evolution in yeasts.</title>
        <authorList>
            <person name="Dujon B."/>
            <person name="Sherman D."/>
            <person name="Fischer G."/>
            <person name="Durrens P."/>
            <person name="Casaregola S."/>
            <person name="Lafontaine I."/>
            <person name="de Montigny J."/>
            <person name="Marck C."/>
            <person name="Neuveglise C."/>
            <person name="Talla E."/>
            <person name="Goffard N."/>
            <person name="Frangeul L."/>
            <person name="Aigle M."/>
            <person name="Anthouard V."/>
            <person name="Babour A."/>
            <person name="Barbe V."/>
            <person name="Barnay S."/>
            <person name="Blanchin S."/>
            <person name="Beckerich J.-M."/>
            <person name="Beyne E."/>
            <person name="Bleykasten C."/>
            <person name="Boisrame A."/>
            <person name="Boyer J."/>
            <person name="Cattolico L."/>
            <person name="Confanioleri F."/>
            <person name="de Daruvar A."/>
            <person name="Despons L."/>
            <person name="Fabre E."/>
            <person name="Fairhead C."/>
            <person name="Ferry-Dumazet H."/>
            <person name="Groppi A."/>
            <person name="Hantraye F."/>
            <person name="Hennequin C."/>
            <person name="Jauniaux N."/>
            <person name="Joyet P."/>
            <person name="Kachouri R."/>
            <person name="Kerrest A."/>
            <person name="Koszul R."/>
            <person name="Lemaire M."/>
            <person name="Lesur I."/>
            <person name="Ma L."/>
            <person name="Muller H."/>
            <person name="Nicaud J.-M."/>
            <person name="Nikolski M."/>
            <person name="Oztas S."/>
            <person name="Ozier-Kalogeropoulos O."/>
            <person name="Pellenz S."/>
            <person name="Potier S."/>
            <person name="Richard G.-F."/>
            <person name="Straub M.-L."/>
            <person name="Suleau A."/>
            <person name="Swennen D."/>
            <person name="Tekaia F."/>
            <person name="Wesolowski-Louvel M."/>
            <person name="Westhof E."/>
            <person name="Wirth B."/>
            <person name="Zeniou-Meyer M."/>
            <person name="Zivanovic Y."/>
            <person name="Bolotin-Fukuhara M."/>
            <person name="Thierry A."/>
            <person name="Bouchier C."/>
            <person name="Caudron B."/>
            <person name="Scarpelli C."/>
            <person name="Gaillardin C."/>
            <person name="Weissenbach J."/>
            <person name="Wincker P."/>
            <person name="Souciet J.-L."/>
        </authorList>
    </citation>
    <scope>NUCLEOTIDE SEQUENCE [LARGE SCALE GENOMIC DNA]</scope>
    <source>
        <strain>CLIB 122 / E 150</strain>
    </source>
</reference>
<feature type="chain" id="PRO_0000413152" description="Inosine triphosphate pyrophosphatase">
    <location>
        <begin position="1"/>
        <end position="188"/>
    </location>
</feature>
<feature type="binding site" evidence="1">
    <location>
        <begin position="7"/>
        <end position="12"/>
    </location>
    <ligand>
        <name>ITP</name>
        <dbReference type="ChEBI" id="CHEBI:61402"/>
    </ligand>
</feature>
<feature type="binding site" evidence="1">
    <location>
        <position position="36"/>
    </location>
    <ligand>
        <name>Mg(2+)</name>
        <dbReference type="ChEBI" id="CHEBI:18420"/>
    </ligand>
</feature>
<feature type="binding site" evidence="1">
    <location>
        <position position="48"/>
    </location>
    <ligand>
        <name>ITP</name>
        <dbReference type="ChEBI" id="CHEBI:61402"/>
    </ligand>
</feature>
<feature type="binding site" evidence="1">
    <location>
        <begin position="64"/>
        <end position="65"/>
    </location>
    <ligand>
        <name>ITP</name>
        <dbReference type="ChEBI" id="CHEBI:61402"/>
    </ligand>
</feature>
<feature type="binding site" evidence="1">
    <location>
        <position position="81"/>
    </location>
    <ligand>
        <name>ITP</name>
        <dbReference type="ChEBI" id="CHEBI:61402"/>
    </ligand>
</feature>
<feature type="binding site" evidence="1">
    <location>
        <begin position="140"/>
        <end position="143"/>
    </location>
    <ligand>
        <name>ITP</name>
        <dbReference type="ChEBI" id="CHEBI:61402"/>
    </ligand>
</feature>
<feature type="binding site" evidence="1">
    <location>
        <position position="163"/>
    </location>
    <ligand>
        <name>ITP</name>
        <dbReference type="ChEBI" id="CHEBI:61402"/>
    </ligand>
</feature>
<feature type="binding site" evidence="1">
    <location>
        <begin position="168"/>
        <end position="169"/>
    </location>
    <ligand>
        <name>ITP</name>
        <dbReference type="ChEBI" id="CHEBI:61402"/>
    </ligand>
</feature>
<organism>
    <name type="scientific">Yarrowia lipolytica (strain CLIB 122 / E 150)</name>
    <name type="common">Yeast</name>
    <name type="synonym">Candida lipolytica</name>
    <dbReference type="NCBI Taxonomy" id="284591"/>
    <lineage>
        <taxon>Eukaryota</taxon>
        <taxon>Fungi</taxon>
        <taxon>Dikarya</taxon>
        <taxon>Ascomycota</taxon>
        <taxon>Saccharomycotina</taxon>
        <taxon>Dipodascomycetes</taxon>
        <taxon>Dipodascales</taxon>
        <taxon>Dipodascales incertae sedis</taxon>
        <taxon>Yarrowia</taxon>
    </lineage>
</organism>
<evidence type="ECO:0000255" key="1">
    <source>
        <dbReference type="HAMAP-Rule" id="MF_03148"/>
    </source>
</evidence>
<comment type="function">
    <text evidence="1">Pyrophosphatase that hydrolyzes non-canonical purine nucleotides such as inosine triphosphate (ITP), deoxyinosine triphosphate (dITP) or xanthosine 5'-triphosphate (XTP) to their respective monophosphate derivatives. The enzyme does not distinguish between the deoxy- and ribose forms. Probably excludes non-canonical purines from RNA and DNA precursor pools, thus preventing their incorporation into RNA and DNA and avoiding chromosomal lesions.</text>
</comment>
<comment type="catalytic activity">
    <reaction evidence="1">
        <text>ITP + H2O = IMP + diphosphate + H(+)</text>
        <dbReference type="Rhea" id="RHEA:29399"/>
        <dbReference type="ChEBI" id="CHEBI:15377"/>
        <dbReference type="ChEBI" id="CHEBI:15378"/>
        <dbReference type="ChEBI" id="CHEBI:33019"/>
        <dbReference type="ChEBI" id="CHEBI:58053"/>
        <dbReference type="ChEBI" id="CHEBI:61402"/>
        <dbReference type="EC" id="3.6.1.66"/>
    </reaction>
    <physiologicalReaction direction="left-to-right" evidence="1">
        <dbReference type="Rhea" id="RHEA:29400"/>
    </physiologicalReaction>
</comment>
<comment type="catalytic activity">
    <reaction evidence="1">
        <text>dITP + H2O = dIMP + diphosphate + H(+)</text>
        <dbReference type="Rhea" id="RHEA:28342"/>
        <dbReference type="ChEBI" id="CHEBI:15377"/>
        <dbReference type="ChEBI" id="CHEBI:15378"/>
        <dbReference type="ChEBI" id="CHEBI:33019"/>
        <dbReference type="ChEBI" id="CHEBI:61194"/>
        <dbReference type="ChEBI" id="CHEBI:61382"/>
        <dbReference type="EC" id="3.6.1.66"/>
    </reaction>
    <physiologicalReaction direction="left-to-right" evidence="1">
        <dbReference type="Rhea" id="RHEA:28343"/>
    </physiologicalReaction>
</comment>
<comment type="catalytic activity">
    <reaction evidence="1">
        <text>XTP + H2O = XMP + diphosphate + H(+)</text>
        <dbReference type="Rhea" id="RHEA:28610"/>
        <dbReference type="ChEBI" id="CHEBI:15377"/>
        <dbReference type="ChEBI" id="CHEBI:15378"/>
        <dbReference type="ChEBI" id="CHEBI:33019"/>
        <dbReference type="ChEBI" id="CHEBI:57464"/>
        <dbReference type="ChEBI" id="CHEBI:61314"/>
        <dbReference type="EC" id="3.6.1.66"/>
    </reaction>
    <physiologicalReaction direction="left-to-right" evidence="1">
        <dbReference type="Rhea" id="RHEA:28611"/>
    </physiologicalReaction>
</comment>
<comment type="cofactor">
    <cofactor evidence="1">
        <name>Mg(2+)</name>
        <dbReference type="ChEBI" id="CHEBI:18420"/>
    </cofactor>
    <cofactor evidence="1">
        <name>Mn(2+)</name>
        <dbReference type="ChEBI" id="CHEBI:29035"/>
    </cofactor>
    <text evidence="1">Binds 1 divalent metal cation per subunit; can use either Mg(2+) or Mn(2+).</text>
</comment>
<comment type="subunit">
    <text evidence="1">Homodimer.</text>
</comment>
<comment type="subcellular location">
    <subcellularLocation>
        <location evidence="1">Cytoplasm</location>
    </subcellularLocation>
    <subcellularLocation>
        <location evidence="1">Nucleus</location>
    </subcellularLocation>
</comment>
<comment type="similarity">
    <text evidence="1">Belongs to the HAM1 NTPase family.</text>
</comment>
<proteinExistence type="inferred from homology"/>
<dbReference type="EC" id="3.6.1.66" evidence="1"/>
<dbReference type="EMBL" id="CR382128">
    <property type="protein sequence ID" value="CAG83496.1"/>
    <property type="molecule type" value="Genomic_DNA"/>
</dbReference>
<dbReference type="RefSeq" id="XP_501243.1">
    <property type="nucleotide sequence ID" value="XM_501243.1"/>
</dbReference>
<dbReference type="SMR" id="Q6CDL9"/>
<dbReference type="FunCoup" id="Q6CDL9">
    <property type="interactions" value="765"/>
</dbReference>
<dbReference type="STRING" id="284591.Q6CDL9"/>
<dbReference type="EnsemblFungi" id="CAG83496">
    <property type="protein sequence ID" value="CAG83496"/>
    <property type="gene ID" value="YALI0_B22924g"/>
</dbReference>
<dbReference type="KEGG" id="yli:2906904"/>
<dbReference type="VEuPathDB" id="FungiDB:YALI0_B22924g"/>
<dbReference type="HOGENOM" id="CLU_082080_1_1_1"/>
<dbReference type="InParanoid" id="Q6CDL9"/>
<dbReference type="OMA" id="YDPIFQP"/>
<dbReference type="OrthoDB" id="105716at4891"/>
<dbReference type="Proteomes" id="UP000001300">
    <property type="component" value="Chromosome B"/>
</dbReference>
<dbReference type="GO" id="GO:0005737">
    <property type="term" value="C:cytoplasm"/>
    <property type="evidence" value="ECO:0000318"/>
    <property type="project" value="GO_Central"/>
</dbReference>
<dbReference type="GO" id="GO:0005634">
    <property type="term" value="C:nucleus"/>
    <property type="evidence" value="ECO:0007669"/>
    <property type="project" value="UniProtKB-SubCell"/>
</dbReference>
<dbReference type="GO" id="GO:0035870">
    <property type="term" value="F:dITP diphosphatase activity"/>
    <property type="evidence" value="ECO:0007669"/>
    <property type="project" value="RHEA"/>
</dbReference>
<dbReference type="GO" id="GO:0036220">
    <property type="term" value="F:ITP diphosphatase activity"/>
    <property type="evidence" value="ECO:0007669"/>
    <property type="project" value="RHEA"/>
</dbReference>
<dbReference type="GO" id="GO:0046872">
    <property type="term" value="F:metal ion binding"/>
    <property type="evidence" value="ECO:0007669"/>
    <property type="project" value="UniProtKB-KW"/>
</dbReference>
<dbReference type="GO" id="GO:0047429">
    <property type="term" value="F:nucleoside triphosphate diphosphatase activity"/>
    <property type="evidence" value="ECO:0000318"/>
    <property type="project" value="GO_Central"/>
</dbReference>
<dbReference type="GO" id="GO:0000166">
    <property type="term" value="F:nucleotide binding"/>
    <property type="evidence" value="ECO:0007669"/>
    <property type="project" value="UniProtKB-KW"/>
</dbReference>
<dbReference type="GO" id="GO:0036222">
    <property type="term" value="F:XTP diphosphatase activity"/>
    <property type="evidence" value="ECO:0007669"/>
    <property type="project" value="RHEA"/>
</dbReference>
<dbReference type="GO" id="GO:0009204">
    <property type="term" value="P:deoxyribonucleoside triphosphate catabolic process"/>
    <property type="evidence" value="ECO:0007669"/>
    <property type="project" value="UniProtKB-UniRule"/>
</dbReference>
<dbReference type="GO" id="GO:0009143">
    <property type="term" value="P:nucleoside triphosphate catabolic process"/>
    <property type="evidence" value="ECO:0000318"/>
    <property type="project" value="GO_Central"/>
</dbReference>
<dbReference type="GO" id="GO:0009117">
    <property type="term" value="P:nucleotide metabolic process"/>
    <property type="evidence" value="ECO:0007669"/>
    <property type="project" value="UniProtKB-KW"/>
</dbReference>
<dbReference type="CDD" id="cd00515">
    <property type="entry name" value="HAM1"/>
    <property type="match status" value="1"/>
</dbReference>
<dbReference type="FunFam" id="3.90.950.10:FF:000003">
    <property type="entry name" value="Inosine triphosphate pyrophosphatase"/>
    <property type="match status" value="1"/>
</dbReference>
<dbReference type="Gene3D" id="3.90.950.10">
    <property type="match status" value="1"/>
</dbReference>
<dbReference type="HAMAP" id="MF_03148">
    <property type="entry name" value="HAM1_NTPase"/>
    <property type="match status" value="1"/>
</dbReference>
<dbReference type="InterPro" id="IPR027502">
    <property type="entry name" value="ITPase"/>
</dbReference>
<dbReference type="InterPro" id="IPR029001">
    <property type="entry name" value="ITPase-like_fam"/>
</dbReference>
<dbReference type="InterPro" id="IPR002637">
    <property type="entry name" value="RdgB/HAM1"/>
</dbReference>
<dbReference type="NCBIfam" id="TIGR00042">
    <property type="entry name" value="RdgB/HAM1 family non-canonical purine NTP pyrophosphatase"/>
    <property type="match status" value="1"/>
</dbReference>
<dbReference type="PANTHER" id="PTHR11067:SF9">
    <property type="entry name" value="INOSINE TRIPHOSPHATE PYROPHOSPHATASE"/>
    <property type="match status" value="1"/>
</dbReference>
<dbReference type="PANTHER" id="PTHR11067">
    <property type="entry name" value="INOSINE TRIPHOSPHATE PYROPHOSPHATASE/HAM1 PROTEIN"/>
    <property type="match status" value="1"/>
</dbReference>
<dbReference type="Pfam" id="PF01725">
    <property type="entry name" value="Ham1p_like"/>
    <property type="match status" value="1"/>
</dbReference>
<dbReference type="SUPFAM" id="SSF52972">
    <property type="entry name" value="ITPase-like"/>
    <property type="match status" value="1"/>
</dbReference>
<sequence length="188" mass="20483">MSVVFVTGNAGKLRETNHILAPTGIELTSHKLDLEETQGTIEEVSIAKAKAAAKILNKPVLVEDTALGFAALKGLPGVYIKWFLDSLGHEGLNKMLAGFEDKSATAWCTFAYCGGPDEDVLLFQGTCEGTIVPPRGENNFGWNAVFEPKGYTETFAEMSEETKNAISHRFKALEKLKVFLAEKAEQSK</sequence>
<name>ITPA_YARLI</name>